<reference key="1">
    <citation type="journal article" date="2011" name="J. Bacteriol.">
        <title>Comparative genomics of 28 Salmonella enterica isolates: evidence for CRISPR-mediated adaptive sublineage evolution.</title>
        <authorList>
            <person name="Fricke W.F."/>
            <person name="Mammel M.K."/>
            <person name="McDermott P.F."/>
            <person name="Tartera C."/>
            <person name="White D.G."/>
            <person name="Leclerc J.E."/>
            <person name="Ravel J."/>
            <person name="Cebula T.A."/>
        </authorList>
    </citation>
    <scope>NUCLEOTIDE SEQUENCE [LARGE SCALE GENOMIC DNA]</scope>
    <source>
        <strain>SL254</strain>
    </source>
</reference>
<evidence type="ECO:0000255" key="1">
    <source>
        <dbReference type="HAMAP-Rule" id="MF_00765"/>
    </source>
</evidence>
<accession>B4T3I1</accession>
<keyword id="KW-0963">Cytoplasm</keyword>
<keyword id="KW-0690">Ribosome biogenesis</keyword>
<keyword id="KW-0694">RNA-binding</keyword>
<keyword id="KW-0699">rRNA-binding</keyword>
<dbReference type="EMBL" id="CP001113">
    <property type="protein sequence ID" value="ACF61662.1"/>
    <property type="molecule type" value="Genomic_DNA"/>
</dbReference>
<dbReference type="SMR" id="B4T3I1"/>
<dbReference type="KEGG" id="see:SNSL254_A4782"/>
<dbReference type="HOGENOM" id="CLU_106757_2_0_6"/>
<dbReference type="Proteomes" id="UP000008824">
    <property type="component" value="Chromosome"/>
</dbReference>
<dbReference type="GO" id="GO:0005829">
    <property type="term" value="C:cytosol"/>
    <property type="evidence" value="ECO:0007669"/>
    <property type="project" value="TreeGrafter"/>
</dbReference>
<dbReference type="GO" id="GO:0043022">
    <property type="term" value="F:ribosome binding"/>
    <property type="evidence" value="ECO:0007669"/>
    <property type="project" value="UniProtKB-UniRule"/>
</dbReference>
<dbReference type="GO" id="GO:0019843">
    <property type="term" value="F:rRNA binding"/>
    <property type="evidence" value="ECO:0007669"/>
    <property type="project" value="UniProtKB-UniRule"/>
</dbReference>
<dbReference type="GO" id="GO:1902626">
    <property type="term" value="P:assembly of large subunit precursor of preribosome"/>
    <property type="evidence" value="ECO:0007669"/>
    <property type="project" value="UniProtKB-UniRule"/>
</dbReference>
<dbReference type="CDD" id="cd16331">
    <property type="entry name" value="YjgA-like"/>
    <property type="match status" value="1"/>
</dbReference>
<dbReference type="FunFam" id="1.10.60.30:FF:000001">
    <property type="entry name" value="UPF0307 protein YjgA"/>
    <property type="match status" value="1"/>
</dbReference>
<dbReference type="FunFam" id="1.10.60.30:FF:000002">
    <property type="entry name" value="UPF0307 protein YjgA"/>
    <property type="match status" value="1"/>
</dbReference>
<dbReference type="Gene3D" id="1.10.60.30">
    <property type="entry name" value="PSPTO4464-like domains"/>
    <property type="match status" value="2"/>
</dbReference>
<dbReference type="HAMAP" id="MF_00765">
    <property type="entry name" value="DarP"/>
    <property type="match status" value="1"/>
</dbReference>
<dbReference type="InterPro" id="IPR006839">
    <property type="entry name" value="DarP"/>
</dbReference>
<dbReference type="InterPro" id="IPR023153">
    <property type="entry name" value="DarP_sf"/>
</dbReference>
<dbReference type="NCBIfam" id="NF003593">
    <property type="entry name" value="PRK05255.1-1"/>
    <property type="match status" value="1"/>
</dbReference>
<dbReference type="PANTHER" id="PTHR38101">
    <property type="entry name" value="UPF0307 PROTEIN YJGA"/>
    <property type="match status" value="1"/>
</dbReference>
<dbReference type="PANTHER" id="PTHR38101:SF1">
    <property type="entry name" value="UPF0307 PROTEIN YJGA"/>
    <property type="match status" value="1"/>
</dbReference>
<dbReference type="Pfam" id="PF04751">
    <property type="entry name" value="DarP"/>
    <property type="match status" value="1"/>
</dbReference>
<dbReference type="PIRSF" id="PIRSF016183">
    <property type="entry name" value="UCP016183"/>
    <property type="match status" value="1"/>
</dbReference>
<dbReference type="SUPFAM" id="SSF158710">
    <property type="entry name" value="PSPTO4464-like"/>
    <property type="match status" value="1"/>
</dbReference>
<sequence>MTKQPEDWLDDVPGDDIEDEDDEIIWVSKSEIKRDAEELKRLGAELVDLGKNALDKIPLDADLRDAIELAQRIKMEGRRRQLQLIGKMLRQRDVEPIRQALDKLKNRHNQQVVLFHKLEHLRDRLIVEGDDAVAEVLTLWPHADRQQLRSLIRNAKKEKEGNKPPKSARQIFQYLRELAENEG</sequence>
<organism>
    <name type="scientific">Salmonella newport (strain SL254)</name>
    <dbReference type="NCBI Taxonomy" id="423368"/>
    <lineage>
        <taxon>Bacteria</taxon>
        <taxon>Pseudomonadati</taxon>
        <taxon>Pseudomonadota</taxon>
        <taxon>Gammaproteobacteria</taxon>
        <taxon>Enterobacterales</taxon>
        <taxon>Enterobacteriaceae</taxon>
        <taxon>Salmonella</taxon>
    </lineage>
</organism>
<gene>
    <name evidence="1" type="primary">darP</name>
    <name type="ordered locus">SNSL254_A4782</name>
</gene>
<proteinExistence type="inferred from homology"/>
<feature type="chain" id="PRO_1000198397" description="Dual-action ribosomal maturation protein DarP">
    <location>
        <begin position="1"/>
        <end position="183"/>
    </location>
</feature>
<protein>
    <recommendedName>
        <fullName evidence="1">Dual-action ribosomal maturation protein DarP</fullName>
    </recommendedName>
    <alternativeName>
        <fullName evidence="1">Large ribosomal subunit assembly factor DarP</fullName>
    </alternativeName>
</protein>
<comment type="function">
    <text evidence="1">Member of a network of 50S ribosomal subunit biogenesis factors which assembles along the 30S-50S interface, preventing incorrect 23S rRNA structures from forming. Promotes peptidyl transferase center (PTC) maturation.</text>
</comment>
<comment type="subcellular location">
    <subcellularLocation>
        <location evidence="1">Cytoplasm</location>
    </subcellularLocation>
    <text evidence="1">Associates with late stage pre-50S ribosomal subunits.</text>
</comment>
<comment type="similarity">
    <text evidence="1">Belongs to the DarP family.</text>
</comment>
<name>DARP_SALNS</name>